<accession>B8DNA7</accession>
<name>RL24_NITV9</name>
<evidence type="ECO:0000255" key="1">
    <source>
        <dbReference type="HAMAP-Rule" id="MF_01326"/>
    </source>
</evidence>
<evidence type="ECO:0000305" key="2"/>
<keyword id="KW-0687">Ribonucleoprotein</keyword>
<keyword id="KW-0689">Ribosomal protein</keyword>
<keyword id="KW-0694">RNA-binding</keyword>
<keyword id="KW-0699">rRNA-binding</keyword>
<proteinExistence type="inferred from homology"/>
<dbReference type="EMBL" id="CP001197">
    <property type="protein sequence ID" value="ACL07051.1"/>
    <property type="molecule type" value="Genomic_DNA"/>
</dbReference>
<dbReference type="SMR" id="B8DNA7"/>
<dbReference type="STRING" id="883.DvMF_0090"/>
<dbReference type="KEGG" id="dvm:DvMF_0090"/>
<dbReference type="eggNOG" id="COG0198">
    <property type="taxonomic scope" value="Bacteria"/>
</dbReference>
<dbReference type="HOGENOM" id="CLU_093315_2_3_7"/>
<dbReference type="OrthoDB" id="9807419at2"/>
<dbReference type="GO" id="GO:1990904">
    <property type="term" value="C:ribonucleoprotein complex"/>
    <property type="evidence" value="ECO:0007669"/>
    <property type="project" value="UniProtKB-KW"/>
</dbReference>
<dbReference type="GO" id="GO:0005840">
    <property type="term" value="C:ribosome"/>
    <property type="evidence" value="ECO:0007669"/>
    <property type="project" value="UniProtKB-KW"/>
</dbReference>
<dbReference type="GO" id="GO:0019843">
    <property type="term" value="F:rRNA binding"/>
    <property type="evidence" value="ECO:0007669"/>
    <property type="project" value="UniProtKB-UniRule"/>
</dbReference>
<dbReference type="GO" id="GO:0003735">
    <property type="term" value="F:structural constituent of ribosome"/>
    <property type="evidence" value="ECO:0007669"/>
    <property type="project" value="InterPro"/>
</dbReference>
<dbReference type="GO" id="GO:0006412">
    <property type="term" value="P:translation"/>
    <property type="evidence" value="ECO:0007669"/>
    <property type="project" value="UniProtKB-UniRule"/>
</dbReference>
<dbReference type="CDD" id="cd06089">
    <property type="entry name" value="KOW_RPL26"/>
    <property type="match status" value="1"/>
</dbReference>
<dbReference type="FunFam" id="2.30.30.30:FF:000004">
    <property type="entry name" value="50S ribosomal protein L24"/>
    <property type="match status" value="1"/>
</dbReference>
<dbReference type="Gene3D" id="2.30.30.30">
    <property type="match status" value="1"/>
</dbReference>
<dbReference type="HAMAP" id="MF_01326_B">
    <property type="entry name" value="Ribosomal_uL24_B"/>
    <property type="match status" value="1"/>
</dbReference>
<dbReference type="InterPro" id="IPR005824">
    <property type="entry name" value="KOW"/>
</dbReference>
<dbReference type="InterPro" id="IPR014722">
    <property type="entry name" value="Rib_uL2_dom2"/>
</dbReference>
<dbReference type="InterPro" id="IPR003256">
    <property type="entry name" value="Ribosomal_uL24"/>
</dbReference>
<dbReference type="InterPro" id="IPR005825">
    <property type="entry name" value="Ribosomal_uL24_CS"/>
</dbReference>
<dbReference type="InterPro" id="IPR041988">
    <property type="entry name" value="Ribosomal_uL24_KOW"/>
</dbReference>
<dbReference type="InterPro" id="IPR008991">
    <property type="entry name" value="Translation_prot_SH3-like_sf"/>
</dbReference>
<dbReference type="NCBIfam" id="TIGR01079">
    <property type="entry name" value="rplX_bact"/>
    <property type="match status" value="1"/>
</dbReference>
<dbReference type="PANTHER" id="PTHR12903">
    <property type="entry name" value="MITOCHONDRIAL RIBOSOMAL PROTEIN L24"/>
    <property type="match status" value="1"/>
</dbReference>
<dbReference type="Pfam" id="PF00467">
    <property type="entry name" value="KOW"/>
    <property type="match status" value="1"/>
</dbReference>
<dbReference type="Pfam" id="PF17136">
    <property type="entry name" value="ribosomal_L24"/>
    <property type="match status" value="1"/>
</dbReference>
<dbReference type="SMART" id="SM00739">
    <property type="entry name" value="KOW"/>
    <property type="match status" value="1"/>
</dbReference>
<dbReference type="SUPFAM" id="SSF50104">
    <property type="entry name" value="Translation proteins SH3-like domain"/>
    <property type="match status" value="1"/>
</dbReference>
<dbReference type="PROSITE" id="PS01108">
    <property type="entry name" value="RIBOSOMAL_L24"/>
    <property type="match status" value="1"/>
</dbReference>
<gene>
    <name evidence="1" type="primary">rplX</name>
    <name type="ordered locus">DvMF_0090</name>
</gene>
<comment type="function">
    <text evidence="1">One of two assembly initiator proteins, it binds directly to the 5'-end of the 23S rRNA, where it nucleates assembly of the 50S subunit.</text>
</comment>
<comment type="function">
    <text evidence="1">One of the proteins that surrounds the polypeptide exit tunnel on the outside of the subunit.</text>
</comment>
<comment type="subunit">
    <text evidence="1">Part of the 50S ribosomal subunit.</text>
</comment>
<comment type="similarity">
    <text evidence="1">Belongs to the universal ribosomal protein uL24 family.</text>
</comment>
<sequence length="107" mass="12153">MKQFRIRKDDKVVVIAGKDKGKIGKVLKVLPKKDGVLVEKVNMVKRHMRANPYRQQPGGIIEKEMPLDISNVMVMCDACAKATKVGYRYTEDGKKVRFCKKCNEIIG</sequence>
<organism>
    <name type="scientific">Nitratidesulfovibrio vulgaris (strain DSM 19637 / Miyazaki F)</name>
    <name type="common">Desulfovibrio vulgaris</name>
    <dbReference type="NCBI Taxonomy" id="883"/>
    <lineage>
        <taxon>Bacteria</taxon>
        <taxon>Pseudomonadati</taxon>
        <taxon>Thermodesulfobacteriota</taxon>
        <taxon>Desulfovibrionia</taxon>
        <taxon>Desulfovibrionales</taxon>
        <taxon>Desulfovibrionaceae</taxon>
        <taxon>Nitratidesulfovibrio</taxon>
    </lineage>
</organism>
<protein>
    <recommendedName>
        <fullName evidence="1">Large ribosomal subunit protein uL24</fullName>
    </recommendedName>
    <alternativeName>
        <fullName evidence="2">50S ribosomal protein L24</fullName>
    </alternativeName>
</protein>
<reference key="1">
    <citation type="submission" date="2008-10" db="EMBL/GenBank/DDBJ databases">
        <title>Complete sequence of Desulfovibrio vulgaris str. 'Miyazaki F'.</title>
        <authorList>
            <person name="Lucas S."/>
            <person name="Copeland A."/>
            <person name="Lapidus A."/>
            <person name="Glavina del Rio T."/>
            <person name="Dalin E."/>
            <person name="Tice H."/>
            <person name="Bruce D."/>
            <person name="Goodwin L."/>
            <person name="Pitluck S."/>
            <person name="Sims D."/>
            <person name="Brettin T."/>
            <person name="Detter J.C."/>
            <person name="Han C."/>
            <person name="Larimer F."/>
            <person name="Land M."/>
            <person name="Hauser L."/>
            <person name="Kyrpides N."/>
            <person name="Mikhailova N."/>
            <person name="Hazen T.C."/>
            <person name="Richardson P."/>
        </authorList>
    </citation>
    <scope>NUCLEOTIDE SEQUENCE [LARGE SCALE GENOMIC DNA]</scope>
    <source>
        <strain>DSM 19637 / Miyazaki F</strain>
    </source>
</reference>
<feature type="chain" id="PRO_1000141988" description="Large ribosomal subunit protein uL24">
    <location>
        <begin position="1"/>
        <end position="107"/>
    </location>
</feature>